<dbReference type="EMBL" id="AE017196">
    <property type="protein sequence ID" value="AAS14378.1"/>
    <property type="molecule type" value="Genomic_DNA"/>
</dbReference>
<dbReference type="RefSeq" id="WP_010962756.1">
    <property type="nucleotide sequence ID" value="NZ_OX384529.1"/>
</dbReference>
<dbReference type="SMR" id="P61071"/>
<dbReference type="EnsemblBacteria" id="AAS14378">
    <property type="protein sequence ID" value="AAS14378"/>
    <property type="gene ID" value="WD_0680"/>
</dbReference>
<dbReference type="GeneID" id="70036163"/>
<dbReference type="KEGG" id="wol:WD_0680"/>
<dbReference type="eggNOG" id="COG0088">
    <property type="taxonomic scope" value="Bacteria"/>
</dbReference>
<dbReference type="Proteomes" id="UP000008215">
    <property type="component" value="Chromosome"/>
</dbReference>
<dbReference type="GO" id="GO:1990904">
    <property type="term" value="C:ribonucleoprotein complex"/>
    <property type="evidence" value="ECO:0007669"/>
    <property type="project" value="UniProtKB-KW"/>
</dbReference>
<dbReference type="GO" id="GO:0005840">
    <property type="term" value="C:ribosome"/>
    <property type="evidence" value="ECO:0007669"/>
    <property type="project" value="UniProtKB-KW"/>
</dbReference>
<dbReference type="GO" id="GO:0019843">
    <property type="term" value="F:rRNA binding"/>
    <property type="evidence" value="ECO:0007669"/>
    <property type="project" value="UniProtKB-UniRule"/>
</dbReference>
<dbReference type="GO" id="GO:0003735">
    <property type="term" value="F:structural constituent of ribosome"/>
    <property type="evidence" value="ECO:0007669"/>
    <property type="project" value="InterPro"/>
</dbReference>
<dbReference type="GO" id="GO:0006412">
    <property type="term" value="P:translation"/>
    <property type="evidence" value="ECO:0007669"/>
    <property type="project" value="UniProtKB-UniRule"/>
</dbReference>
<dbReference type="Gene3D" id="3.40.1370.10">
    <property type="match status" value="1"/>
</dbReference>
<dbReference type="HAMAP" id="MF_01328_B">
    <property type="entry name" value="Ribosomal_uL4_B"/>
    <property type="match status" value="1"/>
</dbReference>
<dbReference type="InterPro" id="IPR002136">
    <property type="entry name" value="Ribosomal_uL4"/>
</dbReference>
<dbReference type="InterPro" id="IPR013005">
    <property type="entry name" value="Ribosomal_uL4-like"/>
</dbReference>
<dbReference type="InterPro" id="IPR023574">
    <property type="entry name" value="Ribosomal_uL4_dom_sf"/>
</dbReference>
<dbReference type="NCBIfam" id="TIGR03953">
    <property type="entry name" value="rplD_bact"/>
    <property type="match status" value="1"/>
</dbReference>
<dbReference type="PANTHER" id="PTHR10746">
    <property type="entry name" value="50S RIBOSOMAL PROTEIN L4"/>
    <property type="match status" value="1"/>
</dbReference>
<dbReference type="PANTHER" id="PTHR10746:SF6">
    <property type="entry name" value="LARGE RIBOSOMAL SUBUNIT PROTEIN UL4M"/>
    <property type="match status" value="1"/>
</dbReference>
<dbReference type="Pfam" id="PF00573">
    <property type="entry name" value="Ribosomal_L4"/>
    <property type="match status" value="1"/>
</dbReference>
<dbReference type="SUPFAM" id="SSF52166">
    <property type="entry name" value="Ribosomal protein L4"/>
    <property type="match status" value="1"/>
</dbReference>
<accession>P61071</accession>
<protein>
    <recommendedName>
        <fullName evidence="1">Large ribosomal subunit protein uL4</fullName>
    </recommendedName>
    <alternativeName>
        <fullName evidence="3">50S ribosomal protein L4</fullName>
    </alternativeName>
</protein>
<proteinExistence type="inferred from homology"/>
<feature type="chain" id="PRO_0000129313" description="Large ribosomal subunit protein uL4">
    <location>
        <begin position="1"/>
        <end position="204"/>
    </location>
</feature>
<feature type="region of interest" description="Disordered" evidence="2">
    <location>
        <begin position="49"/>
        <end position="76"/>
    </location>
</feature>
<reference key="1">
    <citation type="journal article" date="2004" name="PLoS Biol.">
        <title>Phylogenomics of the reproductive parasite Wolbachia pipientis wMel: a streamlined genome overrun by mobile genetic elements.</title>
        <authorList>
            <person name="Wu M."/>
            <person name="Sun L.V."/>
            <person name="Vamathevan J.J."/>
            <person name="Riegler M."/>
            <person name="DeBoy R.T."/>
            <person name="Brownlie J.C."/>
            <person name="McGraw E.A."/>
            <person name="Martin W."/>
            <person name="Esser C."/>
            <person name="Ahmadinejad N."/>
            <person name="Wiegand C."/>
            <person name="Madupu R."/>
            <person name="Beanan M.J."/>
            <person name="Brinkac L.M."/>
            <person name="Daugherty S.C."/>
            <person name="Durkin A.S."/>
            <person name="Kolonay J.F."/>
            <person name="Nelson W.C."/>
            <person name="Mohamoud Y."/>
            <person name="Lee P."/>
            <person name="Berry K.J."/>
            <person name="Young M.B."/>
            <person name="Utterback T.R."/>
            <person name="Weidman J.F."/>
            <person name="Nierman W.C."/>
            <person name="Paulsen I.T."/>
            <person name="Nelson K.E."/>
            <person name="Tettelin H."/>
            <person name="O'Neill S.L."/>
            <person name="Eisen J.A."/>
        </authorList>
    </citation>
    <scope>NUCLEOTIDE SEQUENCE [LARGE SCALE GENOMIC DNA]</scope>
</reference>
<organism>
    <name type="scientific">Wolbachia pipientis wMel</name>
    <dbReference type="NCBI Taxonomy" id="163164"/>
    <lineage>
        <taxon>Bacteria</taxon>
        <taxon>Pseudomonadati</taxon>
        <taxon>Pseudomonadota</taxon>
        <taxon>Alphaproteobacteria</taxon>
        <taxon>Rickettsiales</taxon>
        <taxon>Anaplasmataceae</taxon>
        <taxon>Wolbachieae</taxon>
        <taxon>Wolbachia</taxon>
    </lineage>
</organism>
<name>RL4_WOLPM</name>
<gene>
    <name evidence="1" type="primary">rplD</name>
    <name type="ordered locus">WD_0680</name>
</gene>
<keyword id="KW-0687">Ribonucleoprotein</keyword>
<keyword id="KW-0689">Ribosomal protein</keyword>
<keyword id="KW-0694">RNA-binding</keyword>
<keyword id="KW-0699">rRNA-binding</keyword>
<evidence type="ECO:0000255" key="1">
    <source>
        <dbReference type="HAMAP-Rule" id="MF_01328"/>
    </source>
</evidence>
<evidence type="ECO:0000256" key="2">
    <source>
        <dbReference type="SAM" id="MobiDB-lite"/>
    </source>
</evidence>
<evidence type="ECO:0000305" key="3"/>
<sequence>MECNLVNLSNDNVGAAQLNPLIFSAKQKLSILHDIVRWQLAKRRAGTHKTKGISDVSGTTAKPYGQKRTGRARQGSLRSPQFRGGGIIFGPVVRSHTYSLNKKVRKFGLKIALSLKYLNNQVIILDNLNIDVKKTSEMCKCIKNFKFSSFLIVGDYGDDLLRAAKNLHYVDLIKPIGLNVFDILNHECVMLTKDTLKHLEGRLL</sequence>
<comment type="function">
    <text evidence="1">One of the primary rRNA binding proteins, this protein initially binds near the 5'-end of the 23S rRNA. It is important during the early stages of 50S assembly. It makes multiple contacts with different domains of the 23S rRNA in the assembled 50S subunit and ribosome.</text>
</comment>
<comment type="function">
    <text evidence="1">Forms part of the polypeptide exit tunnel.</text>
</comment>
<comment type="subunit">
    <text evidence="1">Part of the 50S ribosomal subunit.</text>
</comment>
<comment type="similarity">
    <text evidence="1">Belongs to the universal ribosomal protein uL4 family.</text>
</comment>